<proteinExistence type="evidence at protein level"/>
<keyword id="KW-0002">3D-structure</keyword>
<keyword id="KW-0004">4Fe-4S</keyword>
<keyword id="KW-0963">Cytoplasm</keyword>
<keyword id="KW-0903">Direct protein sequencing</keyword>
<keyword id="KW-0408">Iron</keyword>
<keyword id="KW-0411">Iron-sulfur</keyword>
<keyword id="KW-0456">Lyase</keyword>
<keyword id="KW-0479">Metal-binding</keyword>
<keyword id="KW-0597">Phosphoprotein</keyword>
<keyword id="KW-1267">Proteomics identification</keyword>
<keyword id="KW-1185">Reference proteome</keyword>
<keyword id="KW-0694">RNA-binding</keyword>
<keyword id="KW-0816">Tricarboxylic acid cycle</keyword>
<feature type="chain" id="PRO_0000076680" description="Cytoplasmic aconitate hydratase">
    <location>
        <begin position="1"/>
        <end position="889"/>
    </location>
</feature>
<feature type="binding site" evidence="1">
    <location>
        <position position="86"/>
    </location>
    <ligand>
        <name>substrate</name>
    </ligand>
</feature>
<feature type="binding site" evidence="1">
    <location>
        <begin position="205"/>
        <end position="207"/>
    </location>
    <ligand>
        <name>substrate</name>
    </ligand>
</feature>
<feature type="binding site" evidence="1">
    <location>
        <position position="437"/>
    </location>
    <ligand>
        <name>[4Fe-4S] cluster</name>
        <dbReference type="ChEBI" id="CHEBI:49883"/>
    </ligand>
</feature>
<feature type="binding site" evidence="1">
    <location>
        <position position="503"/>
    </location>
    <ligand>
        <name>[4Fe-4S] cluster</name>
        <dbReference type="ChEBI" id="CHEBI:49883"/>
    </ligand>
</feature>
<feature type="binding site" evidence="1">
    <location>
        <position position="506"/>
    </location>
    <ligand>
        <name>[4Fe-4S] cluster</name>
        <dbReference type="ChEBI" id="CHEBI:49883"/>
    </ligand>
</feature>
<feature type="binding site" evidence="1">
    <location>
        <position position="536"/>
    </location>
    <ligand>
        <name>substrate</name>
    </ligand>
</feature>
<feature type="binding site" evidence="1">
    <location>
        <position position="541"/>
    </location>
    <ligand>
        <name>substrate</name>
    </ligand>
</feature>
<feature type="binding site" evidence="1">
    <location>
        <position position="699"/>
    </location>
    <ligand>
        <name>substrate</name>
    </ligand>
</feature>
<feature type="binding site" evidence="1">
    <location>
        <begin position="779"/>
        <end position="780"/>
    </location>
    <ligand>
        <name>substrate</name>
    </ligand>
</feature>
<feature type="modified residue" description="Phosphothreonine" evidence="13">
    <location>
        <position position="628"/>
    </location>
</feature>
<feature type="sequence variant" id="VAR_069413" description="In dbSNP:rs150373174." evidence="8">
    <original>T</original>
    <variation>M</variation>
    <location>
        <position position="318"/>
    </location>
</feature>
<feature type="sequence variant" id="VAR_048180" description="In dbSNP:rs3814519.">
    <original>A</original>
    <variation>D</variation>
    <location>
        <position position="395"/>
    </location>
</feature>
<feature type="sequence variant" id="VAR_048181" description="In dbSNP:rs34630459.">
    <original>G</original>
    <variation>R</variation>
    <location>
        <position position="486"/>
    </location>
</feature>
<feature type="mutagenesis site" description="No effect on aconitase activity or on RNA binding." evidence="10">
    <original>C</original>
    <variation>S</variation>
    <location>
        <position position="300"/>
    </location>
</feature>
<feature type="mutagenesis site" description="Loss of aconitase activity. Leads to constitutive RNA binding, irrespective of iron levels." evidence="10">
    <original>C</original>
    <variation>S</variation>
    <location>
        <position position="437"/>
    </location>
</feature>
<feature type="mutagenesis site" description="Loss of aconitase activity. Leads to constitutive RNA binding, irrespective of iron levels." evidence="10">
    <original>C</original>
    <variation>S</variation>
    <location>
        <position position="503"/>
    </location>
</feature>
<feature type="mutagenesis site" description="Loss of aconitase activity. Leads to constitutive RNA binding, irrespective of iron levels." evidence="10">
    <original>C</original>
    <variation>S</variation>
    <location>
        <position position="506"/>
    </location>
</feature>
<feature type="mutagenesis site" description="Strongly reduced RNA binding." evidence="10">
    <original>R</original>
    <variation>Q</variation>
    <location>
        <position position="536"/>
    </location>
</feature>
<feature type="mutagenesis site" description="Strongly reduced RNA binding." evidence="10">
    <original>R</original>
    <variation>Q</variation>
    <location>
        <position position="541"/>
    </location>
</feature>
<feature type="mutagenesis site" description="No effect on RNA binding." evidence="10">
    <original>R</original>
    <variation>K</variation>
    <location>
        <position position="699"/>
    </location>
</feature>
<feature type="mutagenesis site" description="No effect on iron-regulated RNA binding. Loss of aconitase activity." evidence="10">
    <original>S</original>
    <variation>A</variation>
    <location>
        <position position="778"/>
    </location>
</feature>
<feature type="mutagenesis site" description="Nearly abolishes RNA binding." evidence="10">
    <original>R</original>
    <variation>Q</variation>
    <location>
        <position position="780"/>
    </location>
</feature>
<feature type="helix" evidence="15">
    <location>
        <begin position="6"/>
        <end position="8"/>
    </location>
</feature>
<feature type="strand" evidence="15">
    <location>
        <begin position="9"/>
        <end position="12"/>
    </location>
</feature>
<feature type="strand" evidence="15">
    <location>
        <begin position="20"/>
        <end position="22"/>
    </location>
</feature>
<feature type="helix" evidence="15">
    <location>
        <begin position="24"/>
        <end position="27"/>
    </location>
</feature>
<feature type="helix" evidence="15">
    <location>
        <begin position="32"/>
        <end position="34"/>
    </location>
</feature>
<feature type="helix" evidence="15">
    <location>
        <begin position="37"/>
        <end position="48"/>
    </location>
</feature>
<feature type="strand" evidence="15">
    <location>
        <begin position="52"/>
        <end position="55"/>
    </location>
</feature>
<feature type="helix" evidence="15">
    <location>
        <begin position="57"/>
        <end position="64"/>
    </location>
</feature>
<feature type="helix" evidence="15">
    <location>
        <begin position="66"/>
        <end position="69"/>
    </location>
</feature>
<feature type="turn" evidence="15">
    <location>
        <begin position="70"/>
        <end position="73"/>
    </location>
</feature>
<feature type="strand" evidence="15">
    <location>
        <begin position="75"/>
        <end position="78"/>
    </location>
</feature>
<feature type="strand" evidence="15">
    <location>
        <begin position="81"/>
        <end position="86"/>
    </location>
</feature>
<feature type="helix" evidence="15">
    <location>
        <begin position="87"/>
        <end position="106"/>
    </location>
</feature>
<feature type="helix" evidence="15">
    <location>
        <begin position="111"/>
        <end position="113"/>
    </location>
</feature>
<feature type="strand" evidence="15">
    <location>
        <begin position="120"/>
        <end position="123"/>
    </location>
</feature>
<feature type="helix" evidence="15">
    <location>
        <begin position="138"/>
        <end position="163"/>
    </location>
</feature>
<feature type="strand" evidence="15">
    <location>
        <begin position="167"/>
        <end position="170"/>
    </location>
</feature>
<feature type="helix" evidence="15">
    <location>
        <begin position="177"/>
        <end position="183"/>
    </location>
</feature>
<feature type="strand" evidence="15">
    <location>
        <begin position="188"/>
        <end position="192"/>
    </location>
</feature>
<feature type="strand" evidence="15">
    <location>
        <begin position="195"/>
        <end position="198"/>
    </location>
</feature>
<feature type="strand" evidence="15">
    <location>
        <begin position="200"/>
        <end position="205"/>
    </location>
</feature>
<feature type="helix" evidence="15">
    <location>
        <begin position="206"/>
        <end position="214"/>
    </location>
</feature>
<feature type="strand" evidence="15">
    <location>
        <begin position="217"/>
        <end position="220"/>
    </location>
</feature>
<feature type="helix" evidence="15">
    <location>
        <begin position="223"/>
        <end position="230"/>
    </location>
</feature>
<feature type="strand" evidence="15">
    <location>
        <begin position="235"/>
        <end position="238"/>
    </location>
</feature>
<feature type="strand" evidence="15">
    <location>
        <begin position="242"/>
        <end position="249"/>
    </location>
</feature>
<feature type="helix" evidence="15">
    <location>
        <begin position="257"/>
        <end position="271"/>
    </location>
</feature>
<feature type="strand" evidence="15">
    <location>
        <begin position="277"/>
        <end position="282"/>
    </location>
</feature>
<feature type="helix" evidence="15">
    <location>
        <begin position="283"/>
        <end position="285"/>
    </location>
</feature>
<feature type="helix" evidence="15">
    <location>
        <begin position="290"/>
        <end position="298"/>
    </location>
</feature>
<feature type="helix" evidence="15">
    <location>
        <begin position="300"/>
        <end position="303"/>
    </location>
</feature>
<feature type="strand" evidence="15">
    <location>
        <begin position="306"/>
        <end position="309"/>
    </location>
</feature>
<feature type="helix" evidence="15">
    <location>
        <begin position="314"/>
        <end position="322"/>
    </location>
</feature>
<feature type="helix" evidence="15">
    <location>
        <begin position="327"/>
        <end position="340"/>
    </location>
</feature>
<feature type="helix" evidence="15">
    <location>
        <begin position="349"/>
        <end position="351"/>
    </location>
</feature>
<feature type="strand" evidence="15">
    <location>
        <begin position="356"/>
        <end position="362"/>
    </location>
</feature>
<feature type="helix" evidence="15">
    <location>
        <begin position="363"/>
        <end position="365"/>
    </location>
</feature>
<feature type="strand" evidence="15">
    <location>
        <begin position="368"/>
        <end position="371"/>
    </location>
</feature>
<feature type="strand" evidence="15">
    <location>
        <begin position="379"/>
        <end position="381"/>
    </location>
</feature>
<feature type="helix" evidence="15">
    <location>
        <begin position="382"/>
        <end position="384"/>
    </location>
</feature>
<feature type="helix" evidence="15">
    <location>
        <begin position="385"/>
        <end position="394"/>
    </location>
</feature>
<feature type="helix" evidence="15">
    <location>
        <begin position="406"/>
        <end position="408"/>
    </location>
</feature>
<feature type="strand" evidence="15">
    <location>
        <begin position="412"/>
        <end position="417"/>
    </location>
</feature>
<feature type="strand" evidence="15">
    <location>
        <begin position="420"/>
        <end position="425"/>
    </location>
</feature>
<feature type="strand" evidence="15">
    <location>
        <begin position="428"/>
        <end position="434"/>
    </location>
</feature>
<feature type="helix" evidence="15">
    <location>
        <begin position="437"/>
        <end position="440"/>
    </location>
</feature>
<feature type="helix" evidence="15">
    <location>
        <begin position="443"/>
        <end position="458"/>
    </location>
</feature>
<feature type="strand" evidence="15">
    <location>
        <begin position="467"/>
        <end position="471"/>
    </location>
</feature>
<feature type="helix" evidence="15">
    <location>
        <begin position="476"/>
        <end position="484"/>
    </location>
</feature>
<feature type="helix" evidence="15">
    <location>
        <begin position="488"/>
        <end position="493"/>
    </location>
</feature>
<feature type="strand" evidence="14">
    <location>
        <begin position="501"/>
        <end position="503"/>
    </location>
</feature>
<feature type="helix" evidence="15">
    <location>
        <begin position="504"/>
        <end position="507"/>
    </location>
</feature>
<feature type="helix" evidence="15">
    <location>
        <begin position="515"/>
        <end position="524"/>
    </location>
</feature>
<feature type="strand" evidence="15">
    <location>
        <begin position="529"/>
        <end position="535"/>
    </location>
</feature>
<feature type="turn" evidence="14">
    <location>
        <begin position="539"/>
        <end position="541"/>
    </location>
</feature>
<feature type="strand" evidence="15">
    <location>
        <begin position="547"/>
        <end position="551"/>
    </location>
</feature>
<feature type="helix" evidence="15">
    <location>
        <begin position="554"/>
        <end position="563"/>
    </location>
</feature>
<feature type="strand" evidence="14">
    <location>
        <begin position="564"/>
        <end position="566"/>
    </location>
</feature>
<feature type="turn" evidence="15">
    <location>
        <begin position="570"/>
        <end position="572"/>
    </location>
</feature>
<feature type="strand" evidence="15">
    <location>
        <begin position="575"/>
        <end position="578"/>
    </location>
</feature>
<feature type="turn" evidence="15">
    <location>
        <begin position="579"/>
        <end position="581"/>
    </location>
</feature>
<feature type="strand" evidence="15">
    <location>
        <begin position="582"/>
        <end position="584"/>
    </location>
</feature>
<feature type="helix" evidence="15">
    <location>
        <begin position="586"/>
        <end position="589"/>
    </location>
</feature>
<feature type="helix" evidence="15">
    <location>
        <begin position="593"/>
        <end position="603"/>
    </location>
</feature>
<feature type="helix" evidence="15">
    <location>
        <begin position="606"/>
        <end position="613"/>
    </location>
</feature>
<feature type="turn" evidence="15">
    <location>
        <begin position="614"/>
        <end position="618"/>
    </location>
</feature>
<feature type="helix" evidence="15">
    <location>
        <begin position="621"/>
        <end position="625"/>
    </location>
</feature>
<feature type="helix" evidence="15">
    <location>
        <begin position="647"/>
        <end position="649"/>
    </location>
</feature>
<feature type="strand" evidence="15">
    <location>
        <begin position="662"/>
        <end position="671"/>
    </location>
</feature>
<feature type="helix" evidence="15">
    <location>
        <begin position="677"/>
        <end position="680"/>
    </location>
</feature>
<feature type="strand" evidence="15">
    <location>
        <begin position="688"/>
        <end position="690"/>
    </location>
</feature>
<feature type="helix" evidence="15">
    <location>
        <begin position="691"/>
        <end position="698"/>
    </location>
</feature>
<feature type="helix" evidence="15">
    <location>
        <begin position="703"/>
        <end position="705"/>
    </location>
</feature>
<feature type="helix" evidence="15">
    <location>
        <begin position="710"/>
        <end position="712"/>
    </location>
</feature>
<feature type="helix" evidence="15">
    <location>
        <begin position="716"/>
        <end position="721"/>
    </location>
</feature>
<feature type="turn" evidence="15">
    <location>
        <begin position="722"/>
        <end position="724"/>
    </location>
</feature>
<feature type="turn" evidence="15">
    <location>
        <begin position="732"/>
        <end position="734"/>
    </location>
</feature>
<feature type="strand" evidence="15">
    <location>
        <begin position="735"/>
        <end position="737"/>
    </location>
</feature>
<feature type="strand" evidence="15">
    <location>
        <begin position="739"/>
        <end position="742"/>
    </location>
</feature>
<feature type="turn" evidence="15">
    <location>
        <begin position="744"/>
        <end position="746"/>
    </location>
</feature>
<feature type="strand" evidence="15">
    <location>
        <begin position="749"/>
        <end position="751"/>
    </location>
</feature>
<feature type="helix" evidence="15">
    <location>
        <begin position="752"/>
        <end position="761"/>
    </location>
</feature>
<feature type="strand" evidence="15">
    <location>
        <begin position="766"/>
        <end position="769"/>
    </location>
</feature>
<feature type="strand" evidence="15">
    <location>
        <begin position="772"/>
        <end position="774"/>
    </location>
</feature>
<feature type="helix" evidence="15">
    <location>
        <begin position="782"/>
        <end position="789"/>
    </location>
</feature>
<feature type="strand" evidence="15">
    <location>
        <begin position="792"/>
        <end position="798"/>
    </location>
</feature>
<feature type="helix" evidence="15">
    <location>
        <begin position="802"/>
        <end position="810"/>
    </location>
</feature>
<feature type="strand" evidence="15">
    <location>
        <begin position="814"/>
        <end position="818"/>
    </location>
</feature>
<feature type="helix" evidence="15">
    <location>
        <begin position="824"/>
        <end position="827"/>
    </location>
</feature>
<feature type="strand" evidence="15">
    <location>
        <begin position="835"/>
        <end position="837"/>
    </location>
</feature>
<feature type="strand" evidence="15">
    <location>
        <begin position="848"/>
        <end position="853"/>
    </location>
</feature>
<feature type="strand" evidence="15">
    <location>
        <begin position="858"/>
        <end position="863"/>
    </location>
</feature>
<feature type="helix" evidence="15">
    <location>
        <begin position="868"/>
        <end position="876"/>
    </location>
</feature>
<feature type="helix" evidence="15">
    <location>
        <begin position="879"/>
        <end position="888"/>
    </location>
</feature>
<accession>P21399</accession>
<accession>D3DRK7</accession>
<accession>Q14652</accession>
<accession>Q5VZA7</accession>
<gene>
    <name type="primary">ACO1</name>
    <name type="synonym">IREB1</name>
</gene>
<sequence length="889" mass="98399">MSNPFAHLAEPLDPVQPGKKFFNLNKLEDSRYGRLPFSIRVLLEAAIRNCDEFLVKKQDIENILHWNVTQHKNIEVPFKPARVILQDFTGVPAVVDFAAMRDAVKKLGGDPEKINPVCPADLVIDHSIQVDFNRRADSLQKNQDLEFERNRERFEFLKWGSQAFHNMRIIPPGSGIIHQVNLEYLARVVFDQDGYYYPDSLVGTDSHTTMIDGLGILGWGVGGIEAEAVMLGQPISMVLPQVIGYRLMGKPHPLVTSTDIVLTITKHLRQVGVVGKFVEFFGPGVAQLSIADRATIANMCPEYGATAAFFPVDEVSITYLVQTGRDEEKLKYIKKYLQAVGMFRDFNDPSQDPDFTQVVELDLKTVVPCCSGPKRPQDKVAVSDMKKDFESCLGAKQGFKGFQVAPEHHNDHKTFIYDNTEFTLAHGSVVIAAITSCTNTSNPSVMLGAGLLAKKAVDAGLNVMPYIKTSLSPGSGVVTYYLQESGVMPYLSQLGFDVVGYGCMTCIGNSGPLPEPVVEAITQGDLVAVGVLSGNRNFEGRVHPNTRANYLASPPLVIAYAIAGTIRIDFEKEPLGVNAKGQQVFLKDIWPTRDEIQAVERQYVIPGMFKEVYQKIETVNESWNALATPSDKLFFWNSKSTYIKSPPFFENLTLDLQPPKSIVDAYVLLNLGDSVTTDHISPAGNIARNSPAARYLTNRGLTPREFNSYGSRRGNDAVMARGTFANIRLLNRFLNKQAPQTIHLPSGEILDVFDAAERYQQAGLPLIVLAGKEYGAGSSRDWAAKGPFLLGIKAVLAESYERIHRSNLVGMGVIPLEYLPGENADALGLTGQERYTIIIPENLKPQMKVQVKLDTGKTFQAVMRFDTDVELTYFLNGGILNYMIRKMAK</sequence>
<protein>
    <recommendedName>
        <fullName evidence="12">Cytoplasmic aconitate hydratase</fullName>
        <shortName>Aconitase</shortName>
        <ecNumber evidence="2 4 10">4.2.1.3</ecNumber>
    </recommendedName>
    <alternativeName>
        <fullName>Citrate hydro-lyase</fullName>
    </alternativeName>
    <alternativeName>
        <fullName>Ferritin repressor protein</fullName>
    </alternativeName>
    <alternativeName>
        <fullName>Iron regulatory protein 1</fullName>
        <shortName>IRP1</shortName>
    </alternativeName>
    <alternativeName>
        <fullName>Iron-responsive element-binding protein 1</fullName>
        <shortName>IRE-BP 1</shortName>
    </alternativeName>
</protein>
<organism>
    <name type="scientific">Homo sapiens</name>
    <name type="common">Human</name>
    <dbReference type="NCBI Taxonomy" id="9606"/>
    <lineage>
        <taxon>Eukaryota</taxon>
        <taxon>Metazoa</taxon>
        <taxon>Chordata</taxon>
        <taxon>Craniata</taxon>
        <taxon>Vertebrata</taxon>
        <taxon>Euteleostomi</taxon>
        <taxon>Mammalia</taxon>
        <taxon>Eutheria</taxon>
        <taxon>Euarchontoglires</taxon>
        <taxon>Primates</taxon>
        <taxon>Haplorrhini</taxon>
        <taxon>Catarrhini</taxon>
        <taxon>Hominidae</taxon>
        <taxon>Homo</taxon>
    </lineage>
</organism>
<comment type="function">
    <text evidence="2 4 9 10">Bifunctional iron sensor that switches between 2 activities depending on iron availability (PubMed:1281544, PubMed:1946430, PubMed:8041788). Iron deprivation, promotes its mRNA binding activity through which it regulates the expression of genes involved in iron uptake, sequestration and utilization (PubMed:1281544, PubMed:1946430, PubMed:23891004, PubMed:8041788). Binds to iron-responsive elements (IRES) in the untranslated region of target mRNAs preventing for instance the translation of ferritin and aminolevulinic acid synthase and stabilizing the transferrin receptor mRNA (PubMed:1281544, PubMed:1946430, PubMed:23891004, PubMed:8041788).</text>
</comment>
<comment type="function">
    <text evidence="2 4 10">Conversely, when cellular iron levels are high, binds a 4Fe-4S cluster which precludes RNA binding activity and promotes the aconitase activity, the isomerization of citrate to isocitrate via cis-aconitate.</text>
</comment>
<comment type="catalytic activity">
    <reaction evidence="2 4 10">
        <text>citrate = D-threo-isocitrate</text>
        <dbReference type="Rhea" id="RHEA:10336"/>
        <dbReference type="ChEBI" id="CHEBI:15562"/>
        <dbReference type="ChEBI" id="CHEBI:16947"/>
        <dbReference type="EC" id="4.2.1.3"/>
    </reaction>
</comment>
<comment type="cofactor">
    <cofactor evidence="3">
        <name>[4Fe-4S] cluster</name>
        <dbReference type="ChEBI" id="CHEBI:49883"/>
    </cofactor>
    <text evidence="3">Binds 1 [4Fe-4S] cluster per subunit.</text>
</comment>
<comment type="subunit">
    <text evidence="3 5 6 7">Interacts (when associated with the 4Fe-4S) with FBXL5. Interacts with frataxin(81-210).</text>
</comment>
<comment type="subcellular location">
    <subcellularLocation>
        <location evidence="2">Cytoplasm</location>
        <location evidence="2">Cytosol</location>
    </subcellularLocation>
</comment>
<comment type="similarity">
    <text evidence="11">Belongs to the aconitase/IPM isomerase family.</text>
</comment>
<comment type="online information" name="Wikipedia">
    <link uri="https://en.wikipedia.org/wiki/Aconitase"/>
    <text>Aconitase entry</text>
</comment>
<reference key="1">
    <citation type="journal article" date="1992" name="Nucleic Acids Res.">
        <title>Expression of active iron regulatory factor from a full-length human cDNA by in vitro transcription/translation.</title>
        <authorList>
            <person name="Hirling H."/>
            <person name="Emery-Goodman A."/>
            <person name="Thompson N."/>
            <person name="Neupert B."/>
            <person name="Seiser C."/>
            <person name="Kuehn L."/>
        </authorList>
    </citation>
    <scope>NUCLEOTIDE SEQUENCE [MRNA]</scope>
</reference>
<reference key="2">
    <citation type="submission" date="2006-04" db="EMBL/GenBank/DDBJ databases">
        <authorList>
            <consortium name="NHLBI resequencing and genotyping service (RS&amp;G)"/>
        </authorList>
    </citation>
    <scope>NUCLEOTIDE SEQUENCE [GENOMIC DNA]</scope>
</reference>
<reference key="3">
    <citation type="journal article" date="2004" name="Nature">
        <title>DNA sequence and analysis of human chromosome 9.</title>
        <authorList>
            <person name="Humphray S.J."/>
            <person name="Oliver K."/>
            <person name="Hunt A.R."/>
            <person name="Plumb R.W."/>
            <person name="Loveland J.E."/>
            <person name="Howe K.L."/>
            <person name="Andrews T.D."/>
            <person name="Searle S."/>
            <person name="Hunt S.E."/>
            <person name="Scott C.E."/>
            <person name="Jones M.C."/>
            <person name="Ainscough R."/>
            <person name="Almeida J.P."/>
            <person name="Ambrose K.D."/>
            <person name="Ashwell R.I.S."/>
            <person name="Babbage A.K."/>
            <person name="Babbage S."/>
            <person name="Bagguley C.L."/>
            <person name="Bailey J."/>
            <person name="Banerjee R."/>
            <person name="Barker D.J."/>
            <person name="Barlow K.F."/>
            <person name="Bates K."/>
            <person name="Beasley H."/>
            <person name="Beasley O."/>
            <person name="Bird C.P."/>
            <person name="Bray-Allen S."/>
            <person name="Brown A.J."/>
            <person name="Brown J.Y."/>
            <person name="Burford D."/>
            <person name="Burrill W."/>
            <person name="Burton J."/>
            <person name="Carder C."/>
            <person name="Carter N.P."/>
            <person name="Chapman J.C."/>
            <person name="Chen Y."/>
            <person name="Clarke G."/>
            <person name="Clark S.Y."/>
            <person name="Clee C.M."/>
            <person name="Clegg S."/>
            <person name="Collier R.E."/>
            <person name="Corby N."/>
            <person name="Crosier M."/>
            <person name="Cummings A.T."/>
            <person name="Davies J."/>
            <person name="Dhami P."/>
            <person name="Dunn M."/>
            <person name="Dutta I."/>
            <person name="Dyer L.W."/>
            <person name="Earthrowl M.E."/>
            <person name="Faulkner L."/>
            <person name="Fleming C.J."/>
            <person name="Frankish A."/>
            <person name="Frankland J.A."/>
            <person name="French L."/>
            <person name="Fricker D.G."/>
            <person name="Garner P."/>
            <person name="Garnett J."/>
            <person name="Ghori J."/>
            <person name="Gilbert J.G.R."/>
            <person name="Glison C."/>
            <person name="Grafham D.V."/>
            <person name="Gribble S."/>
            <person name="Griffiths C."/>
            <person name="Griffiths-Jones S."/>
            <person name="Grocock R."/>
            <person name="Guy J."/>
            <person name="Hall R.E."/>
            <person name="Hammond S."/>
            <person name="Harley J.L."/>
            <person name="Harrison E.S.I."/>
            <person name="Hart E.A."/>
            <person name="Heath P.D."/>
            <person name="Henderson C.D."/>
            <person name="Hopkins B.L."/>
            <person name="Howard P.J."/>
            <person name="Howden P.J."/>
            <person name="Huckle E."/>
            <person name="Johnson C."/>
            <person name="Johnson D."/>
            <person name="Joy A.A."/>
            <person name="Kay M."/>
            <person name="Keenan S."/>
            <person name="Kershaw J.K."/>
            <person name="Kimberley A.M."/>
            <person name="King A."/>
            <person name="Knights A."/>
            <person name="Laird G.K."/>
            <person name="Langford C."/>
            <person name="Lawlor S."/>
            <person name="Leongamornlert D.A."/>
            <person name="Leversha M."/>
            <person name="Lloyd C."/>
            <person name="Lloyd D.M."/>
            <person name="Lovell J."/>
            <person name="Martin S."/>
            <person name="Mashreghi-Mohammadi M."/>
            <person name="Matthews L."/>
            <person name="McLaren S."/>
            <person name="McLay K.E."/>
            <person name="McMurray A."/>
            <person name="Milne S."/>
            <person name="Nickerson T."/>
            <person name="Nisbett J."/>
            <person name="Nordsiek G."/>
            <person name="Pearce A.V."/>
            <person name="Peck A.I."/>
            <person name="Porter K.M."/>
            <person name="Pandian R."/>
            <person name="Pelan S."/>
            <person name="Phillimore B."/>
            <person name="Povey S."/>
            <person name="Ramsey Y."/>
            <person name="Rand V."/>
            <person name="Scharfe M."/>
            <person name="Sehra H.K."/>
            <person name="Shownkeen R."/>
            <person name="Sims S.K."/>
            <person name="Skuce C.D."/>
            <person name="Smith M."/>
            <person name="Steward C.A."/>
            <person name="Swarbreck D."/>
            <person name="Sycamore N."/>
            <person name="Tester J."/>
            <person name="Thorpe A."/>
            <person name="Tracey A."/>
            <person name="Tromans A."/>
            <person name="Thomas D.W."/>
            <person name="Wall M."/>
            <person name="Wallis J.M."/>
            <person name="West A.P."/>
            <person name="Whitehead S.L."/>
            <person name="Willey D.L."/>
            <person name="Williams S.A."/>
            <person name="Wilming L."/>
            <person name="Wray P.W."/>
            <person name="Young L."/>
            <person name="Ashurst J.L."/>
            <person name="Coulson A."/>
            <person name="Blocker H."/>
            <person name="Durbin R.M."/>
            <person name="Sulston J.E."/>
            <person name="Hubbard T."/>
            <person name="Jackson M.J."/>
            <person name="Bentley D.R."/>
            <person name="Beck S."/>
            <person name="Rogers J."/>
            <person name="Dunham I."/>
        </authorList>
    </citation>
    <scope>NUCLEOTIDE SEQUENCE [LARGE SCALE GENOMIC DNA]</scope>
</reference>
<reference key="4">
    <citation type="submission" date="2005-09" db="EMBL/GenBank/DDBJ databases">
        <authorList>
            <person name="Mural R.J."/>
            <person name="Istrail S."/>
            <person name="Sutton G.G."/>
            <person name="Florea L."/>
            <person name="Halpern A.L."/>
            <person name="Mobarry C.M."/>
            <person name="Lippert R."/>
            <person name="Walenz B."/>
            <person name="Shatkay H."/>
            <person name="Dew I."/>
            <person name="Miller J.R."/>
            <person name="Flanigan M.J."/>
            <person name="Edwards N.J."/>
            <person name="Bolanos R."/>
            <person name="Fasulo D."/>
            <person name="Halldorsson B.V."/>
            <person name="Hannenhalli S."/>
            <person name="Turner R."/>
            <person name="Yooseph S."/>
            <person name="Lu F."/>
            <person name="Nusskern D.R."/>
            <person name="Shue B.C."/>
            <person name="Zheng X.H."/>
            <person name="Zhong F."/>
            <person name="Delcher A.L."/>
            <person name="Huson D.H."/>
            <person name="Kravitz S.A."/>
            <person name="Mouchard L."/>
            <person name="Reinert K."/>
            <person name="Remington K.A."/>
            <person name="Clark A.G."/>
            <person name="Waterman M.S."/>
            <person name="Eichler E.E."/>
            <person name="Adams M.D."/>
            <person name="Hunkapiller M.W."/>
            <person name="Myers E.W."/>
            <person name="Venter J.C."/>
        </authorList>
    </citation>
    <scope>NUCLEOTIDE SEQUENCE [LARGE SCALE GENOMIC DNA]</scope>
</reference>
<reference key="5">
    <citation type="journal article" date="2004" name="Genome Res.">
        <title>The status, quality, and expansion of the NIH full-length cDNA project: the Mammalian Gene Collection (MGC).</title>
        <authorList>
            <consortium name="The MGC Project Team"/>
        </authorList>
    </citation>
    <scope>NUCLEOTIDE SEQUENCE [LARGE SCALE MRNA]</scope>
    <source>
        <tissue>Uterus</tissue>
    </source>
</reference>
<reference key="6">
    <citation type="journal article" date="1990" name="Proc. Natl. Acad. Sci. U.S.A.">
        <title>Cloning of the cDNA encoding an RNA regulatory protein -- the human iron-responsive element-binding protein.</title>
        <authorList>
            <person name="Rouault T.A."/>
            <person name="Tang C.K."/>
            <person name="Kaptain S."/>
            <person name="Burgess W.H."/>
            <person name="Haile D.J."/>
            <person name="Samaniego F."/>
            <person name="McBride O.W."/>
            <person name="Harford J.B."/>
            <person name="Klausner R.D."/>
        </authorList>
    </citation>
    <scope>NUCLEOTIDE SEQUENCE [MRNA] OF 74-889</scope>
    <scope>RNA-BINDING</scope>
    <scope>PARTIAL PROTEIN SEQUENCE</scope>
</reference>
<reference key="7">
    <citation type="journal article" date="1991" name="Nucleic Acids Res.">
        <title>Homology between IRE-BP, a regulatory RNA-binding protein, aconitase, and isopropylmalate isomerase.</title>
        <authorList>
            <person name="Hentze M.W."/>
            <person name="Argos P."/>
        </authorList>
    </citation>
    <scope>SIMILARITY TO ACONITASES AND IPM ISOMERASES</scope>
</reference>
<reference key="8">
    <citation type="journal article" date="1991" name="Proc. Natl. Acad. Sci. U.S.A.">
        <title>A regulated RNA binding protein also possesses aconitase activity.</title>
        <authorList>
            <person name="Kaptain S."/>
            <person name="Downey W.E."/>
            <person name="Tang C.K."/>
            <person name="Philpott C."/>
            <person name="Haile D.J."/>
            <person name="Orloff D.G."/>
            <person name="Harford J.B."/>
            <person name="Rouault T.A."/>
            <person name="Klausner R.D."/>
        </authorList>
    </citation>
    <scope>FUNCTION</scope>
    <scope>CATALYTIC ACTIVITY</scope>
</reference>
<reference key="9">
    <citation type="journal article" date="1992" name="Proc. Natl. Acad. Sci. U.S.A.">
        <title>Cellular regulation of the iron-responsive element binding protein: disassembly of the cubane iron-sulfur cluster results in high-affinity RNA binding.</title>
        <authorList>
            <person name="Haile D.J."/>
            <person name="Rouault T.A."/>
            <person name="Harford J.B."/>
            <person name="Kennedy M.C."/>
            <person name="Blondin G.A."/>
            <person name="Beinert H."/>
            <person name="Klausner R.D."/>
        </authorList>
    </citation>
    <scope>FUNCTION</scope>
    <scope>CATALYTIC ACTIVITY</scope>
    <scope>SUBCELLULAR LOCATION</scope>
</reference>
<reference key="10">
    <citation type="journal article" date="1994" name="Proc. Natl. Acad. Sci. U.S.A.">
        <title>The bifunctional iron-responsive element binding protein/cytosolic aconitase: the role of active-site residues in ligand binding and regulation.</title>
        <authorList>
            <person name="Philpott C.C."/>
            <person name="Klausner R.D."/>
            <person name="Rouault T.A."/>
        </authorList>
    </citation>
    <scope>FUNCTION</scope>
    <scope>CATALYTIC ACTIVITY</scope>
    <scope>MUTAGENESIS OF CYS-300; CYS-437; CYS-503; CYS-506; ARG-536; ARG-541; ARG-699; SER-778 AND ARG-780</scope>
</reference>
<reference key="11">
    <citation type="journal article" date="2009" name="Science">
        <title>Control of iron homeostasis by an iron-regulated ubiquitin ligase.</title>
        <authorList>
            <person name="Vashisht A.A."/>
            <person name="Zumbrennen K.B."/>
            <person name="Huang X."/>
            <person name="Powers D.N."/>
            <person name="Durazo A."/>
            <person name="Sun D."/>
            <person name="Bhaskaran N."/>
            <person name="Persson A."/>
            <person name="Uhlen M."/>
            <person name="Sangfelt O."/>
            <person name="Spruck C."/>
            <person name="Leibold E.A."/>
            <person name="Wohlschlegel J.A."/>
        </authorList>
    </citation>
    <scope>UBIQUITINATION</scope>
    <scope>INTERACTION WITH FBXL5</scope>
</reference>
<reference key="12">
    <citation type="journal article" date="2009" name="Science">
        <title>An E3 ligase possessing an iron responsive hemerythrin domain is a regulator of iron homeostasis.</title>
        <authorList>
            <person name="Salahudeen A.A."/>
            <person name="Thompson J.W."/>
            <person name="Ruiz J.C."/>
            <person name="Ma H.-W."/>
            <person name="Kinch L.N."/>
            <person name="Li Q."/>
            <person name="Grishin N.V."/>
            <person name="Bruick R.K."/>
        </authorList>
    </citation>
    <scope>UBIQUITINATION</scope>
    <scope>INTERACTION WITH FBXL5</scope>
</reference>
<reference key="13">
    <citation type="journal article" date="2010" name="Hum. Mol. Genet.">
        <title>Molecular control of the cytosolic aconitase/IRP1 switch by extramitochondrial frataxin.</title>
        <authorList>
            <person name="Condo I."/>
            <person name="Malisan F."/>
            <person name="Guccini I."/>
            <person name="Serio D."/>
            <person name="Rufini A."/>
            <person name="Testi R."/>
        </authorList>
    </citation>
    <scope>INTERACTION WITH FRATAXIN(81-210)</scope>
</reference>
<reference key="14">
    <citation type="journal article" date="2011" name="BMC Syst. Biol.">
        <title>Initial characterization of the human central proteome.</title>
        <authorList>
            <person name="Burkard T.R."/>
            <person name="Planyavsky M."/>
            <person name="Kaupe I."/>
            <person name="Breitwieser F.P."/>
            <person name="Buerckstuemmer T."/>
            <person name="Bennett K.L."/>
            <person name="Superti-Furga G."/>
            <person name="Colinge J."/>
        </authorList>
    </citation>
    <scope>IDENTIFICATION BY MASS SPECTROMETRY [LARGE SCALE ANALYSIS]</scope>
</reference>
<reference key="15">
    <citation type="journal article" date="2013" name="Cell Metab.">
        <title>Human CIA2A-FAM96A and CIA2B-FAM96B integrate iron homeostasis and maturation of different subsets of cytosolic-nuclear iron-sulfur proteins.</title>
        <authorList>
            <person name="Stehling O."/>
            <person name="Mascarenhas J."/>
            <person name="Vashisht A.A."/>
            <person name="Sheftel A.D."/>
            <person name="Niggemeyer B."/>
            <person name="Roesser R."/>
            <person name="Pierik A.J."/>
            <person name="Wohlschlegel J.A."/>
            <person name="Lill R."/>
        </authorList>
    </citation>
    <scope>FUNCTION</scope>
    <scope>RNA-BINDING</scope>
</reference>
<reference key="16">
    <citation type="journal article" date="2018" name="Cell Metab.">
        <title>Human CIA2A-FAM96A and CIA2B-FAM96B Integrate Iron Homeostasis and Maturation of Different Subsets of Cytosolic-Nuclear Iron-Sulfur Proteins.</title>
        <authorList>
            <person name="Stehling O."/>
            <person name="Mascarenhas J."/>
            <person name="Vashisht A.A."/>
            <person name="Sheftel A.D."/>
            <person name="Niggemeyer B."/>
            <person name="Roesser R."/>
            <person name="Pierik A.J."/>
            <person name="Wohlschlegel J.A."/>
            <person name="Lill R."/>
        </authorList>
    </citation>
    <scope>ERRATUM OF PUBMED:23891004</scope>
</reference>
<reference key="17">
    <citation type="journal article" date="2014" name="J. Proteomics">
        <title>An enzyme assisted RP-RPLC approach for in-depth analysis of human liver phosphoproteome.</title>
        <authorList>
            <person name="Bian Y."/>
            <person name="Song C."/>
            <person name="Cheng K."/>
            <person name="Dong M."/>
            <person name="Wang F."/>
            <person name="Huang J."/>
            <person name="Sun D."/>
            <person name="Wang L."/>
            <person name="Ye M."/>
            <person name="Zou H."/>
        </authorList>
    </citation>
    <scope>PHOSPHORYLATION [LARGE SCALE ANALYSIS] AT THR-628</scope>
    <scope>IDENTIFICATION BY MASS SPECTROMETRY [LARGE SCALE ANALYSIS]</scope>
    <source>
        <tissue>Liver</tissue>
    </source>
</reference>
<reference key="18">
    <citation type="journal article" date="2006" name="Structure">
        <title>Crystal structure of human iron regulatory protein 1 as cytosolic aconitase.</title>
        <authorList>
            <person name="Dupuy J."/>
            <person name="Volbeda A."/>
            <person name="Carpentier P."/>
            <person name="Darnault C."/>
            <person name="Moulis J.-M."/>
            <person name="Fontecilla-Camps J.C."/>
        </authorList>
    </citation>
    <scope>X-RAY CRYSTALLOGRAPHY (1.85 ANGSTROMS) IN COMPLEX WITH IRON-SULFUR CLUSTER</scope>
    <scope>COFACTOR</scope>
</reference>
<reference key="19">
    <citation type="journal article" date="2012" name="N. Engl. J. Med.">
        <title>Diagnostic exome sequencing in persons with severe intellectual disability.</title>
        <authorList>
            <person name="de Ligt J."/>
            <person name="Willemsen M.H."/>
            <person name="van Bon B.W."/>
            <person name="Kleefstra T."/>
            <person name="Yntema H.G."/>
            <person name="Kroes T."/>
            <person name="Vulto-van Silfhout A.T."/>
            <person name="Koolen D.A."/>
            <person name="de Vries P."/>
            <person name="Gilissen C."/>
            <person name="del Rosario M."/>
            <person name="Hoischen A."/>
            <person name="Scheffer H."/>
            <person name="de Vries B.B."/>
            <person name="Brunner H.G."/>
            <person name="Veltman J.A."/>
            <person name="Vissers L.E."/>
        </authorList>
    </citation>
    <scope>VARIANT MET-318</scope>
</reference>
<name>ACOHC_HUMAN</name>
<evidence type="ECO:0000250" key="1"/>
<evidence type="ECO:0000269" key="2">
    <source>
    </source>
</evidence>
<evidence type="ECO:0000269" key="3">
    <source>
    </source>
</evidence>
<evidence type="ECO:0000269" key="4">
    <source>
    </source>
</evidence>
<evidence type="ECO:0000269" key="5">
    <source>
    </source>
</evidence>
<evidence type="ECO:0000269" key="6">
    <source>
    </source>
</evidence>
<evidence type="ECO:0000269" key="7">
    <source>
    </source>
</evidence>
<evidence type="ECO:0000269" key="8">
    <source>
    </source>
</evidence>
<evidence type="ECO:0000269" key="9">
    <source>
    </source>
</evidence>
<evidence type="ECO:0000269" key="10">
    <source>
    </source>
</evidence>
<evidence type="ECO:0000305" key="11"/>
<evidence type="ECO:0000305" key="12">
    <source>
    </source>
</evidence>
<evidence type="ECO:0007744" key="13">
    <source>
    </source>
</evidence>
<evidence type="ECO:0007829" key="14">
    <source>
        <dbReference type="PDB" id="2B3X"/>
    </source>
</evidence>
<evidence type="ECO:0007829" key="15">
    <source>
        <dbReference type="PDB" id="2B3Y"/>
    </source>
</evidence>
<dbReference type="EC" id="4.2.1.3" evidence="2 4 10"/>
<dbReference type="EMBL" id="Z11559">
    <property type="protein sequence ID" value="CAA77651.1"/>
    <property type="molecule type" value="mRNA"/>
</dbReference>
<dbReference type="EMBL" id="DQ496106">
    <property type="protein sequence ID" value="ABF47095.1"/>
    <property type="molecule type" value="Genomic_DNA"/>
</dbReference>
<dbReference type="EMBL" id="AL161783">
    <property type="status" value="NOT_ANNOTATED_CDS"/>
    <property type="molecule type" value="Genomic_DNA"/>
</dbReference>
<dbReference type="EMBL" id="CH471071">
    <property type="protein sequence ID" value="EAW58549.1"/>
    <property type="molecule type" value="Genomic_DNA"/>
</dbReference>
<dbReference type="EMBL" id="CH471071">
    <property type="protein sequence ID" value="EAW58550.1"/>
    <property type="molecule type" value="Genomic_DNA"/>
</dbReference>
<dbReference type="EMBL" id="CH471071">
    <property type="protein sequence ID" value="EAW58552.1"/>
    <property type="molecule type" value="Genomic_DNA"/>
</dbReference>
<dbReference type="EMBL" id="BC018103">
    <property type="protein sequence ID" value="AAH18103.1"/>
    <property type="molecule type" value="mRNA"/>
</dbReference>
<dbReference type="EMBL" id="M58510">
    <property type="protein sequence ID" value="AAA69900.1"/>
    <property type="molecule type" value="mRNA"/>
</dbReference>
<dbReference type="CCDS" id="CCDS6525.1"/>
<dbReference type="PIR" id="S26403">
    <property type="entry name" value="S26403"/>
</dbReference>
<dbReference type="RefSeq" id="NP_001265281.1">
    <property type="nucleotide sequence ID" value="NM_001278352.2"/>
</dbReference>
<dbReference type="RefSeq" id="NP_001349769.1">
    <property type="nucleotide sequence ID" value="NM_001362840.2"/>
</dbReference>
<dbReference type="RefSeq" id="NP_002188.1">
    <property type="nucleotide sequence ID" value="NM_002197.3"/>
</dbReference>
<dbReference type="RefSeq" id="XP_005251533.1">
    <property type="nucleotide sequence ID" value="XM_005251476.1"/>
</dbReference>
<dbReference type="RefSeq" id="XP_011516190.1">
    <property type="nucleotide sequence ID" value="XM_011517888.1"/>
</dbReference>
<dbReference type="RefSeq" id="XP_054218982.1">
    <property type="nucleotide sequence ID" value="XM_054363007.1"/>
</dbReference>
<dbReference type="PDB" id="2B3X">
    <property type="method" value="X-ray"/>
    <property type="resolution" value="2.54 A"/>
    <property type="chains" value="A=2-889"/>
</dbReference>
<dbReference type="PDB" id="2B3Y">
    <property type="method" value="X-ray"/>
    <property type="resolution" value="1.85 A"/>
    <property type="chains" value="A/B=2-889"/>
</dbReference>
<dbReference type="PDBsum" id="2B3X"/>
<dbReference type="PDBsum" id="2B3Y"/>
<dbReference type="SMR" id="P21399"/>
<dbReference type="BioGRID" id="106564">
    <property type="interactions" value="47"/>
</dbReference>
<dbReference type="FunCoup" id="P21399">
    <property type="interactions" value="1508"/>
</dbReference>
<dbReference type="IntAct" id="P21399">
    <property type="interactions" value="19"/>
</dbReference>
<dbReference type="MINT" id="P21399"/>
<dbReference type="STRING" id="9606.ENSP00000309477"/>
<dbReference type="DrugBank" id="DB06757">
    <property type="generic name" value="Manganese cation"/>
</dbReference>
<dbReference type="MoonDB" id="P21399">
    <property type="type" value="Curated"/>
</dbReference>
<dbReference type="MoonProt" id="P21399"/>
<dbReference type="GlyGen" id="P21399">
    <property type="glycosylation" value="3 sites, 1 N-linked glycan (1 site), 1 O-linked glycan (1 site)"/>
</dbReference>
<dbReference type="iPTMnet" id="P21399"/>
<dbReference type="MetOSite" id="P21399"/>
<dbReference type="PhosphoSitePlus" id="P21399"/>
<dbReference type="SwissPalm" id="P21399"/>
<dbReference type="BioMuta" id="ACO1"/>
<dbReference type="DMDM" id="3123225"/>
<dbReference type="REPRODUCTION-2DPAGE" id="IPI00008485"/>
<dbReference type="CPTAC" id="CPTAC-2716"/>
<dbReference type="jPOST" id="P21399"/>
<dbReference type="MassIVE" id="P21399"/>
<dbReference type="PaxDb" id="9606-ENSP00000309477"/>
<dbReference type="PeptideAtlas" id="P21399"/>
<dbReference type="ProteomicsDB" id="53867"/>
<dbReference type="Pumba" id="P21399"/>
<dbReference type="Antibodypedia" id="10637">
    <property type="antibodies" value="579 antibodies from 39 providers"/>
</dbReference>
<dbReference type="DNASU" id="48"/>
<dbReference type="Ensembl" id="ENST00000309951.8">
    <property type="protein sequence ID" value="ENSP00000309477.5"/>
    <property type="gene ID" value="ENSG00000122729.19"/>
</dbReference>
<dbReference type="Ensembl" id="ENST00000379923.5">
    <property type="protein sequence ID" value="ENSP00000369255.1"/>
    <property type="gene ID" value="ENSG00000122729.19"/>
</dbReference>
<dbReference type="Ensembl" id="ENST00000541043.5">
    <property type="protein sequence ID" value="ENSP00000438733.2"/>
    <property type="gene ID" value="ENSG00000122729.19"/>
</dbReference>
<dbReference type="GeneID" id="48"/>
<dbReference type="KEGG" id="hsa:48"/>
<dbReference type="MANE-Select" id="ENST00000309951.8">
    <property type="protein sequence ID" value="ENSP00000309477.5"/>
    <property type="RefSeq nucleotide sequence ID" value="NM_002197.3"/>
    <property type="RefSeq protein sequence ID" value="NP_002188.1"/>
</dbReference>
<dbReference type="AGR" id="HGNC:117"/>
<dbReference type="CTD" id="48"/>
<dbReference type="DisGeNET" id="48"/>
<dbReference type="GeneCards" id="ACO1"/>
<dbReference type="HGNC" id="HGNC:117">
    <property type="gene designation" value="ACO1"/>
</dbReference>
<dbReference type="HPA" id="ENSG00000122729">
    <property type="expression patterns" value="Tissue enhanced (liver)"/>
</dbReference>
<dbReference type="MIM" id="100880">
    <property type="type" value="gene"/>
</dbReference>
<dbReference type="neXtProt" id="NX_P21399"/>
<dbReference type="OpenTargets" id="ENSG00000122729"/>
<dbReference type="PharmGKB" id="PA24442"/>
<dbReference type="VEuPathDB" id="HostDB:ENSG00000122729"/>
<dbReference type="eggNOG" id="KOG0452">
    <property type="taxonomic scope" value="Eukaryota"/>
</dbReference>
<dbReference type="GeneTree" id="ENSGT00940000157772"/>
<dbReference type="HOGENOM" id="CLU_013476_2_1_1"/>
<dbReference type="InParanoid" id="P21399"/>
<dbReference type="OMA" id="NGGIMQY"/>
<dbReference type="OrthoDB" id="2279155at2759"/>
<dbReference type="PAN-GO" id="P21399">
    <property type="GO annotations" value="8 GO annotations based on evolutionary models"/>
</dbReference>
<dbReference type="PhylomeDB" id="P21399"/>
<dbReference type="TreeFam" id="TF313476"/>
<dbReference type="BioCyc" id="MetaCyc:HS04597-MONOMER"/>
<dbReference type="BRENDA" id="4.2.1.3">
    <property type="organism ID" value="2681"/>
</dbReference>
<dbReference type="PathwayCommons" id="P21399"/>
<dbReference type="Reactome" id="R-HSA-389542">
    <property type="pathway name" value="NADPH regeneration"/>
</dbReference>
<dbReference type="Reactome" id="R-HSA-917937">
    <property type="pathway name" value="Iron uptake and transport"/>
</dbReference>
<dbReference type="SignaLink" id="P21399"/>
<dbReference type="SIGNOR" id="P21399"/>
<dbReference type="BioGRID-ORCS" id="48">
    <property type="hits" value="9 hits in 1155 CRISPR screens"/>
</dbReference>
<dbReference type="ChiTaRS" id="ACO1">
    <property type="organism name" value="human"/>
</dbReference>
<dbReference type="EvolutionaryTrace" id="P21399"/>
<dbReference type="GenomeRNAi" id="48"/>
<dbReference type="Pharos" id="P21399">
    <property type="development level" value="Tbio"/>
</dbReference>
<dbReference type="PRO" id="PR:P21399"/>
<dbReference type="Proteomes" id="UP000005640">
    <property type="component" value="Chromosome 9"/>
</dbReference>
<dbReference type="RNAct" id="P21399">
    <property type="molecule type" value="protein"/>
</dbReference>
<dbReference type="Bgee" id="ENSG00000122729">
    <property type="expression patterns" value="Expressed in right lobe of liver and 192 other cell types or tissues"/>
</dbReference>
<dbReference type="ExpressionAtlas" id="P21399">
    <property type="expression patterns" value="baseline and differential"/>
</dbReference>
<dbReference type="GO" id="GO:0005737">
    <property type="term" value="C:cytoplasm"/>
    <property type="evidence" value="ECO:0000315"/>
    <property type="project" value="CAFA"/>
</dbReference>
<dbReference type="GO" id="GO:0005829">
    <property type="term" value="C:cytosol"/>
    <property type="evidence" value="ECO:0000314"/>
    <property type="project" value="UniProtKB"/>
</dbReference>
<dbReference type="GO" id="GO:0005783">
    <property type="term" value="C:endoplasmic reticulum"/>
    <property type="evidence" value="ECO:0000314"/>
    <property type="project" value="MGI"/>
</dbReference>
<dbReference type="GO" id="GO:0070062">
    <property type="term" value="C:extracellular exosome"/>
    <property type="evidence" value="ECO:0007005"/>
    <property type="project" value="UniProtKB"/>
</dbReference>
<dbReference type="GO" id="GO:0005794">
    <property type="term" value="C:Golgi apparatus"/>
    <property type="evidence" value="ECO:0000314"/>
    <property type="project" value="MGI"/>
</dbReference>
<dbReference type="GO" id="GO:0005739">
    <property type="term" value="C:mitochondrion"/>
    <property type="evidence" value="ECO:0000314"/>
    <property type="project" value="HPA"/>
</dbReference>
<dbReference type="GO" id="GO:0051538">
    <property type="term" value="F:3 iron, 4 sulfur cluster binding"/>
    <property type="evidence" value="ECO:0000315"/>
    <property type="project" value="CAFA"/>
</dbReference>
<dbReference type="GO" id="GO:0051539">
    <property type="term" value="F:4 iron, 4 sulfur cluster binding"/>
    <property type="evidence" value="ECO:0000314"/>
    <property type="project" value="UniProtKB"/>
</dbReference>
<dbReference type="GO" id="GO:0003994">
    <property type="term" value="F:aconitate hydratase activity"/>
    <property type="evidence" value="ECO:0000314"/>
    <property type="project" value="UniProtKB"/>
</dbReference>
<dbReference type="GO" id="GO:0030350">
    <property type="term" value="F:iron-responsive element binding"/>
    <property type="evidence" value="ECO:0000314"/>
    <property type="project" value="UniProtKB"/>
</dbReference>
<dbReference type="GO" id="GO:0051536">
    <property type="term" value="F:iron-sulfur cluster binding"/>
    <property type="evidence" value="ECO:0000269"/>
    <property type="project" value="Reactome"/>
</dbReference>
<dbReference type="GO" id="GO:0046872">
    <property type="term" value="F:metal ion binding"/>
    <property type="evidence" value="ECO:0007669"/>
    <property type="project" value="UniProtKB-KW"/>
</dbReference>
<dbReference type="GO" id="GO:0000900">
    <property type="term" value="F:mRNA regulatory element binding translation repressor activity"/>
    <property type="evidence" value="ECO:0000269"/>
    <property type="project" value="Reactome"/>
</dbReference>
<dbReference type="GO" id="GO:0003723">
    <property type="term" value="F:RNA binding"/>
    <property type="evidence" value="ECO:0000314"/>
    <property type="project" value="UniProtKB"/>
</dbReference>
<dbReference type="GO" id="GO:0006101">
    <property type="term" value="P:citrate metabolic process"/>
    <property type="evidence" value="ECO:0000314"/>
    <property type="project" value="UniProtKB"/>
</dbReference>
<dbReference type="GO" id="GO:0050892">
    <property type="term" value="P:intestinal absorption"/>
    <property type="evidence" value="ECO:0007669"/>
    <property type="project" value="Ensembl"/>
</dbReference>
<dbReference type="GO" id="GO:0006879">
    <property type="term" value="P:intracellular iron ion homeostasis"/>
    <property type="evidence" value="ECO:0000318"/>
    <property type="project" value="GO_Central"/>
</dbReference>
<dbReference type="GO" id="GO:0006740">
    <property type="term" value="P:NADPH regeneration"/>
    <property type="evidence" value="ECO:0007669"/>
    <property type="project" value="Ensembl"/>
</dbReference>
<dbReference type="GO" id="GO:0009791">
    <property type="term" value="P:post-embryonic development"/>
    <property type="evidence" value="ECO:0007669"/>
    <property type="project" value="Ensembl"/>
</dbReference>
<dbReference type="GO" id="GO:0010040">
    <property type="term" value="P:response to iron(II) ion"/>
    <property type="evidence" value="ECO:0000314"/>
    <property type="project" value="UniProtKB"/>
</dbReference>
<dbReference type="GO" id="GO:0006099">
    <property type="term" value="P:tricarboxylic acid cycle"/>
    <property type="evidence" value="ECO:0007669"/>
    <property type="project" value="UniProtKB-KW"/>
</dbReference>
<dbReference type="CDD" id="cd01586">
    <property type="entry name" value="AcnA_IRP"/>
    <property type="match status" value="1"/>
</dbReference>
<dbReference type="CDD" id="cd01580">
    <property type="entry name" value="AcnA_IRP_Swivel"/>
    <property type="match status" value="1"/>
</dbReference>
<dbReference type="FunFam" id="3.30.499.10:FF:000002">
    <property type="entry name" value="Aconitate hydratase"/>
    <property type="match status" value="1"/>
</dbReference>
<dbReference type="FunFam" id="3.30.499.10:FF:000005">
    <property type="entry name" value="cytoplasmic aconitate hydratase"/>
    <property type="match status" value="1"/>
</dbReference>
<dbReference type="FunFam" id="3.20.19.10:FF:000005">
    <property type="entry name" value="Iron-responsive element-binding protein 2"/>
    <property type="match status" value="1"/>
</dbReference>
<dbReference type="Gene3D" id="6.10.190.10">
    <property type="match status" value="1"/>
</dbReference>
<dbReference type="Gene3D" id="3.30.499.10">
    <property type="entry name" value="Aconitase, domain 3"/>
    <property type="match status" value="2"/>
</dbReference>
<dbReference type="Gene3D" id="3.20.19.10">
    <property type="entry name" value="Aconitase, domain 4"/>
    <property type="match status" value="1"/>
</dbReference>
<dbReference type="InterPro" id="IPR044137">
    <property type="entry name" value="AcnA_IRP_Swivel"/>
</dbReference>
<dbReference type="InterPro" id="IPR015931">
    <property type="entry name" value="Acnase/IPM_dHydase_lsu_aba_1/3"/>
</dbReference>
<dbReference type="InterPro" id="IPR001030">
    <property type="entry name" value="Acoase/IPM_deHydtase_lsu_aba"/>
</dbReference>
<dbReference type="InterPro" id="IPR015928">
    <property type="entry name" value="Aconitase/3IPM_dehydase_swvl"/>
</dbReference>
<dbReference type="InterPro" id="IPR006249">
    <property type="entry name" value="Aconitase/IRP2"/>
</dbReference>
<dbReference type="InterPro" id="IPR018136">
    <property type="entry name" value="Aconitase_4Fe-4S_BS"/>
</dbReference>
<dbReference type="InterPro" id="IPR036008">
    <property type="entry name" value="Aconitase_4Fe-4S_dom"/>
</dbReference>
<dbReference type="InterPro" id="IPR000573">
    <property type="entry name" value="AconitaseA/IPMdHydase_ssu_swvl"/>
</dbReference>
<dbReference type="NCBIfam" id="TIGR01341">
    <property type="entry name" value="aconitase_1"/>
    <property type="match status" value="1"/>
</dbReference>
<dbReference type="NCBIfam" id="NF006757">
    <property type="entry name" value="PRK09277.1"/>
    <property type="match status" value="1"/>
</dbReference>
<dbReference type="NCBIfam" id="NF009520">
    <property type="entry name" value="PRK12881.1"/>
    <property type="match status" value="1"/>
</dbReference>
<dbReference type="PANTHER" id="PTHR11670">
    <property type="entry name" value="ACONITASE/IRON-RESPONSIVE ELEMENT FAMILY MEMBER"/>
    <property type="match status" value="1"/>
</dbReference>
<dbReference type="Pfam" id="PF00330">
    <property type="entry name" value="Aconitase"/>
    <property type="match status" value="1"/>
</dbReference>
<dbReference type="Pfam" id="PF00694">
    <property type="entry name" value="Aconitase_C"/>
    <property type="match status" value="1"/>
</dbReference>
<dbReference type="PRINTS" id="PR00415">
    <property type="entry name" value="ACONITASE"/>
</dbReference>
<dbReference type="SUPFAM" id="SSF53732">
    <property type="entry name" value="Aconitase iron-sulfur domain"/>
    <property type="match status" value="1"/>
</dbReference>
<dbReference type="SUPFAM" id="SSF52016">
    <property type="entry name" value="LeuD/IlvD-like"/>
    <property type="match status" value="1"/>
</dbReference>
<dbReference type="PROSITE" id="PS00450">
    <property type="entry name" value="ACONITASE_1"/>
    <property type="match status" value="1"/>
</dbReference>
<dbReference type="PROSITE" id="PS01244">
    <property type="entry name" value="ACONITASE_2"/>
    <property type="match status" value="1"/>
</dbReference>